<keyword id="KW-0687">Ribonucleoprotein</keyword>
<keyword id="KW-0689">Ribosomal protein</keyword>
<keyword id="KW-0694">RNA-binding</keyword>
<keyword id="KW-0699">rRNA-binding</keyword>
<comment type="function">
    <text evidence="1">Binds directly to 23S ribosomal RNA and is necessary for the in vitro assembly process of the 50S ribosomal subunit. It is not involved in the protein synthesizing functions of that subunit.</text>
</comment>
<comment type="similarity">
    <text evidence="1">Belongs to the bacterial ribosomal protein bL20 family.</text>
</comment>
<proteinExistence type="inferred from homology"/>
<dbReference type="EMBL" id="AP008229">
    <property type="protein sequence ID" value="BAE69779.1"/>
    <property type="molecule type" value="Genomic_DNA"/>
</dbReference>
<dbReference type="RefSeq" id="WP_003484828.1">
    <property type="nucleotide sequence ID" value="NC_007705.1"/>
</dbReference>
<dbReference type="SMR" id="Q2P0Z8"/>
<dbReference type="GeneID" id="97510906"/>
<dbReference type="KEGG" id="xom:XOO3024"/>
<dbReference type="HOGENOM" id="CLU_123265_0_1_6"/>
<dbReference type="GO" id="GO:1990904">
    <property type="term" value="C:ribonucleoprotein complex"/>
    <property type="evidence" value="ECO:0007669"/>
    <property type="project" value="UniProtKB-KW"/>
</dbReference>
<dbReference type="GO" id="GO:0005840">
    <property type="term" value="C:ribosome"/>
    <property type="evidence" value="ECO:0007669"/>
    <property type="project" value="UniProtKB-KW"/>
</dbReference>
<dbReference type="GO" id="GO:0019843">
    <property type="term" value="F:rRNA binding"/>
    <property type="evidence" value="ECO:0007669"/>
    <property type="project" value="UniProtKB-UniRule"/>
</dbReference>
<dbReference type="GO" id="GO:0003735">
    <property type="term" value="F:structural constituent of ribosome"/>
    <property type="evidence" value="ECO:0007669"/>
    <property type="project" value="InterPro"/>
</dbReference>
<dbReference type="GO" id="GO:0000027">
    <property type="term" value="P:ribosomal large subunit assembly"/>
    <property type="evidence" value="ECO:0007669"/>
    <property type="project" value="UniProtKB-UniRule"/>
</dbReference>
<dbReference type="GO" id="GO:0006412">
    <property type="term" value="P:translation"/>
    <property type="evidence" value="ECO:0007669"/>
    <property type="project" value="InterPro"/>
</dbReference>
<dbReference type="CDD" id="cd07026">
    <property type="entry name" value="Ribosomal_L20"/>
    <property type="match status" value="1"/>
</dbReference>
<dbReference type="FunFam" id="1.10.1900.20:FF:000001">
    <property type="entry name" value="50S ribosomal protein L20"/>
    <property type="match status" value="1"/>
</dbReference>
<dbReference type="Gene3D" id="6.10.160.10">
    <property type="match status" value="1"/>
</dbReference>
<dbReference type="Gene3D" id="1.10.1900.20">
    <property type="entry name" value="Ribosomal protein L20"/>
    <property type="match status" value="1"/>
</dbReference>
<dbReference type="HAMAP" id="MF_00382">
    <property type="entry name" value="Ribosomal_bL20"/>
    <property type="match status" value="1"/>
</dbReference>
<dbReference type="InterPro" id="IPR005813">
    <property type="entry name" value="Ribosomal_bL20"/>
</dbReference>
<dbReference type="InterPro" id="IPR049946">
    <property type="entry name" value="RIBOSOMAL_L20_CS"/>
</dbReference>
<dbReference type="InterPro" id="IPR035566">
    <property type="entry name" value="Ribosomal_protein_bL20_C"/>
</dbReference>
<dbReference type="NCBIfam" id="TIGR01032">
    <property type="entry name" value="rplT_bact"/>
    <property type="match status" value="1"/>
</dbReference>
<dbReference type="PANTHER" id="PTHR10986">
    <property type="entry name" value="39S RIBOSOMAL PROTEIN L20"/>
    <property type="match status" value="1"/>
</dbReference>
<dbReference type="Pfam" id="PF00453">
    <property type="entry name" value="Ribosomal_L20"/>
    <property type="match status" value="1"/>
</dbReference>
<dbReference type="PRINTS" id="PR00062">
    <property type="entry name" value="RIBOSOMALL20"/>
</dbReference>
<dbReference type="SUPFAM" id="SSF74731">
    <property type="entry name" value="Ribosomal protein L20"/>
    <property type="match status" value="1"/>
</dbReference>
<dbReference type="PROSITE" id="PS00937">
    <property type="entry name" value="RIBOSOMAL_L20"/>
    <property type="match status" value="1"/>
</dbReference>
<organism>
    <name type="scientific">Xanthomonas oryzae pv. oryzae (strain MAFF 311018)</name>
    <dbReference type="NCBI Taxonomy" id="342109"/>
    <lineage>
        <taxon>Bacteria</taxon>
        <taxon>Pseudomonadati</taxon>
        <taxon>Pseudomonadota</taxon>
        <taxon>Gammaproteobacteria</taxon>
        <taxon>Lysobacterales</taxon>
        <taxon>Lysobacteraceae</taxon>
        <taxon>Xanthomonas</taxon>
    </lineage>
</organism>
<accession>Q2P0Z8</accession>
<sequence length="119" mass="13355">MARVKRGVQARRRHKKILTLAKGYYNARRKVFRVAKQAVIKAQQYAYIGRKQKKRNFRSLWITRINAAARINGLSYSRFMNGLLKAGITLDRKVLADIAVHDAAGFAALAEKAKGALAA</sequence>
<reference key="1">
    <citation type="journal article" date="2005" name="Jpn. Agric. Res. Q.">
        <title>Genome sequence of Xanthomonas oryzae pv. oryzae suggests contribution of large numbers of effector genes and insertion sequences to its race diversity.</title>
        <authorList>
            <person name="Ochiai H."/>
            <person name="Inoue Y."/>
            <person name="Takeya M."/>
            <person name="Sasaki A."/>
            <person name="Kaku H."/>
        </authorList>
    </citation>
    <scope>NUCLEOTIDE SEQUENCE [LARGE SCALE GENOMIC DNA]</scope>
    <source>
        <strain>MAFF 311018</strain>
    </source>
</reference>
<gene>
    <name evidence="1" type="primary">rplT</name>
    <name type="ordered locus">XOO3024</name>
</gene>
<protein>
    <recommendedName>
        <fullName evidence="1">Large ribosomal subunit protein bL20</fullName>
    </recommendedName>
    <alternativeName>
        <fullName evidence="2">50S ribosomal protein L20</fullName>
    </alternativeName>
</protein>
<feature type="chain" id="PRO_0000243761" description="Large ribosomal subunit protein bL20">
    <location>
        <begin position="1"/>
        <end position="119"/>
    </location>
</feature>
<name>RL20_XANOM</name>
<evidence type="ECO:0000255" key="1">
    <source>
        <dbReference type="HAMAP-Rule" id="MF_00382"/>
    </source>
</evidence>
<evidence type="ECO:0000305" key="2"/>